<evidence type="ECO:0000255" key="1">
    <source>
        <dbReference type="HAMAP-Rule" id="MF_00150"/>
    </source>
</evidence>
<proteinExistence type="inferred from homology"/>
<organism>
    <name type="scientific">Streptomyces avermitilis (strain ATCC 31267 / DSM 46492 / JCM 5070 / NBRC 14893 / NCIMB 12804 / NRRL 8165 / MA-4680)</name>
    <dbReference type="NCBI Taxonomy" id="227882"/>
    <lineage>
        <taxon>Bacteria</taxon>
        <taxon>Bacillati</taxon>
        <taxon>Actinomycetota</taxon>
        <taxon>Actinomycetes</taxon>
        <taxon>Kitasatosporales</taxon>
        <taxon>Streptomycetaceae</taxon>
        <taxon>Streptomyces</taxon>
    </lineage>
</organism>
<dbReference type="EC" id="1.2.1.38" evidence="1"/>
<dbReference type="EMBL" id="BA000030">
    <property type="protein sequence ID" value="BAC74474.1"/>
    <property type="molecule type" value="Genomic_DNA"/>
</dbReference>
<dbReference type="RefSeq" id="WP_010988162.1">
    <property type="nucleotide sequence ID" value="NZ_JZJK01000082.1"/>
</dbReference>
<dbReference type="SMR" id="Q828A6"/>
<dbReference type="GeneID" id="41543831"/>
<dbReference type="KEGG" id="sma:SAVERM_6763"/>
<dbReference type="eggNOG" id="COG0002">
    <property type="taxonomic scope" value="Bacteria"/>
</dbReference>
<dbReference type="HOGENOM" id="CLU_006384_0_0_11"/>
<dbReference type="OrthoDB" id="9801289at2"/>
<dbReference type="UniPathway" id="UPA00068">
    <property type="reaction ID" value="UER00108"/>
</dbReference>
<dbReference type="Proteomes" id="UP000000428">
    <property type="component" value="Chromosome"/>
</dbReference>
<dbReference type="GO" id="GO:0005737">
    <property type="term" value="C:cytoplasm"/>
    <property type="evidence" value="ECO:0007669"/>
    <property type="project" value="UniProtKB-SubCell"/>
</dbReference>
<dbReference type="GO" id="GO:0003942">
    <property type="term" value="F:N-acetyl-gamma-glutamyl-phosphate reductase activity"/>
    <property type="evidence" value="ECO:0007669"/>
    <property type="project" value="UniProtKB-UniRule"/>
</dbReference>
<dbReference type="GO" id="GO:0051287">
    <property type="term" value="F:NAD binding"/>
    <property type="evidence" value="ECO:0007669"/>
    <property type="project" value="InterPro"/>
</dbReference>
<dbReference type="GO" id="GO:0070401">
    <property type="term" value="F:NADP+ binding"/>
    <property type="evidence" value="ECO:0007669"/>
    <property type="project" value="InterPro"/>
</dbReference>
<dbReference type="GO" id="GO:0006526">
    <property type="term" value="P:L-arginine biosynthetic process"/>
    <property type="evidence" value="ECO:0007669"/>
    <property type="project" value="UniProtKB-UniRule"/>
</dbReference>
<dbReference type="CDD" id="cd24148">
    <property type="entry name" value="AGPR_1_actinobacAGPR_like"/>
    <property type="match status" value="1"/>
</dbReference>
<dbReference type="CDD" id="cd23934">
    <property type="entry name" value="AGPR_1_C"/>
    <property type="match status" value="1"/>
</dbReference>
<dbReference type="FunFam" id="3.30.360.10:FF:000014">
    <property type="entry name" value="N-acetyl-gamma-glutamyl-phosphate reductase"/>
    <property type="match status" value="1"/>
</dbReference>
<dbReference type="Gene3D" id="3.30.360.10">
    <property type="entry name" value="Dihydrodipicolinate Reductase, domain 2"/>
    <property type="match status" value="1"/>
</dbReference>
<dbReference type="Gene3D" id="3.40.50.720">
    <property type="entry name" value="NAD(P)-binding Rossmann-like Domain"/>
    <property type="match status" value="1"/>
</dbReference>
<dbReference type="HAMAP" id="MF_00150">
    <property type="entry name" value="ArgC_type1"/>
    <property type="match status" value="1"/>
</dbReference>
<dbReference type="InterPro" id="IPR023013">
    <property type="entry name" value="AGPR_AS"/>
</dbReference>
<dbReference type="InterPro" id="IPR000706">
    <property type="entry name" value="AGPR_type-1"/>
</dbReference>
<dbReference type="InterPro" id="IPR036291">
    <property type="entry name" value="NAD(P)-bd_dom_sf"/>
</dbReference>
<dbReference type="InterPro" id="IPR050085">
    <property type="entry name" value="NAGSA_dehydrogenase"/>
</dbReference>
<dbReference type="InterPro" id="IPR000534">
    <property type="entry name" value="Semialdehyde_DH_NAD-bd"/>
</dbReference>
<dbReference type="NCBIfam" id="TIGR01850">
    <property type="entry name" value="argC"/>
    <property type="match status" value="1"/>
</dbReference>
<dbReference type="PANTHER" id="PTHR32338:SF10">
    <property type="entry name" value="N-ACETYL-GAMMA-GLUTAMYL-PHOSPHATE REDUCTASE, CHLOROPLASTIC-RELATED"/>
    <property type="match status" value="1"/>
</dbReference>
<dbReference type="PANTHER" id="PTHR32338">
    <property type="entry name" value="N-ACETYL-GAMMA-GLUTAMYL-PHOSPHATE REDUCTASE, CHLOROPLASTIC-RELATED-RELATED"/>
    <property type="match status" value="1"/>
</dbReference>
<dbReference type="Pfam" id="PF01118">
    <property type="entry name" value="Semialdhyde_dh"/>
    <property type="match status" value="1"/>
</dbReference>
<dbReference type="Pfam" id="PF22698">
    <property type="entry name" value="Semialdhyde_dhC_1"/>
    <property type="match status" value="1"/>
</dbReference>
<dbReference type="SMART" id="SM00859">
    <property type="entry name" value="Semialdhyde_dh"/>
    <property type="match status" value="1"/>
</dbReference>
<dbReference type="SUPFAM" id="SSF55347">
    <property type="entry name" value="Glyceraldehyde-3-phosphate dehydrogenase-like, C-terminal domain"/>
    <property type="match status" value="1"/>
</dbReference>
<dbReference type="SUPFAM" id="SSF51735">
    <property type="entry name" value="NAD(P)-binding Rossmann-fold domains"/>
    <property type="match status" value="1"/>
</dbReference>
<dbReference type="PROSITE" id="PS01224">
    <property type="entry name" value="ARGC"/>
    <property type="match status" value="1"/>
</dbReference>
<comment type="function">
    <text evidence="1">Catalyzes the NADPH-dependent reduction of N-acetyl-5-glutamyl phosphate to yield N-acetyl-L-glutamate 5-semialdehyde.</text>
</comment>
<comment type="catalytic activity">
    <reaction evidence="1">
        <text>N-acetyl-L-glutamate 5-semialdehyde + phosphate + NADP(+) = N-acetyl-L-glutamyl 5-phosphate + NADPH + H(+)</text>
        <dbReference type="Rhea" id="RHEA:21588"/>
        <dbReference type="ChEBI" id="CHEBI:15378"/>
        <dbReference type="ChEBI" id="CHEBI:29123"/>
        <dbReference type="ChEBI" id="CHEBI:43474"/>
        <dbReference type="ChEBI" id="CHEBI:57783"/>
        <dbReference type="ChEBI" id="CHEBI:57936"/>
        <dbReference type="ChEBI" id="CHEBI:58349"/>
        <dbReference type="EC" id="1.2.1.38"/>
    </reaction>
</comment>
<comment type="pathway">
    <text evidence="1">Amino-acid biosynthesis; L-arginine biosynthesis; N(2)-acetyl-L-ornithine from L-glutamate: step 3/4.</text>
</comment>
<comment type="subcellular location">
    <subcellularLocation>
        <location evidence="1">Cytoplasm</location>
    </subcellularLocation>
</comment>
<comment type="similarity">
    <text evidence="1">Belongs to the NAGSA dehydrogenase family. Type 1 subfamily.</text>
</comment>
<protein>
    <recommendedName>
        <fullName evidence="1">N-acetyl-gamma-glutamyl-phosphate reductase</fullName>
        <shortName evidence="1">AGPR</shortName>
        <ecNumber evidence="1">1.2.1.38</ecNumber>
    </recommendedName>
    <alternativeName>
        <fullName evidence="1">N-acetyl-glutamate semialdehyde dehydrogenase</fullName>
        <shortName evidence="1">NAGSA dehydrogenase</shortName>
    </alternativeName>
</protein>
<accession>Q828A6</accession>
<gene>
    <name evidence="1" type="primary">argC</name>
    <name type="ordered locus">SAV_6763</name>
</gene>
<keyword id="KW-0028">Amino-acid biosynthesis</keyword>
<keyword id="KW-0055">Arginine biosynthesis</keyword>
<keyword id="KW-0963">Cytoplasm</keyword>
<keyword id="KW-0521">NADP</keyword>
<keyword id="KW-0560">Oxidoreductase</keyword>
<keyword id="KW-1185">Reference proteome</keyword>
<name>ARGC_STRAW</name>
<feature type="chain" id="PRO_0000112456" description="N-acetyl-gamma-glutamyl-phosphate reductase">
    <location>
        <begin position="1"/>
        <end position="342"/>
    </location>
</feature>
<feature type="active site" evidence="1">
    <location>
        <position position="146"/>
    </location>
</feature>
<sequence>MAVRVAVAGASGYAGGEALRLLLAHPEVEIGALTGNSNAGQKLGALQPHLLPLADRVLQETSPDVLAGHDVVFLALPHGQSAAVAEQLGPDVLVVDMGADFRLRNPADWEKFYGSPHAGTWPYGLPELPGGRAALEGSKRIAVPGCYPTAVSLALFPAYAAALAEPEAVIVAASGTSGAGKAAKPHLLGSEVMGSMSPYGVGGVHRHTPEMIQNLGAAAGEPVSVSFTPTLAPMPRGILATCTAKARAGVTAESVRAAYEKAFADEPFVHLLPEGQWPATASVYGSNAVQVQVAYDAAAQRIIAISAIDNLTKGTAGGALQSMNIALGLPEELGLSTIGVAP</sequence>
<reference key="1">
    <citation type="journal article" date="2001" name="Proc. Natl. Acad. Sci. U.S.A.">
        <title>Genome sequence of an industrial microorganism Streptomyces avermitilis: deducing the ability of producing secondary metabolites.</title>
        <authorList>
            <person name="Omura S."/>
            <person name="Ikeda H."/>
            <person name="Ishikawa J."/>
            <person name="Hanamoto A."/>
            <person name="Takahashi C."/>
            <person name="Shinose M."/>
            <person name="Takahashi Y."/>
            <person name="Horikawa H."/>
            <person name="Nakazawa H."/>
            <person name="Osonoe T."/>
            <person name="Kikuchi H."/>
            <person name="Shiba T."/>
            <person name="Sakaki Y."/>
            <person name="Hattori M."/>
        </authorList>
    </citation>
    <scope>NUCLEOTIDE SEQUENCE [LARGE SCALE GENOMIC DNA]</scope>
    <source>
        <strain>ATCC 31267 / DSM 46492 / JCM 5070 / NBRC 14893 / NCIMB 12804 / NRRL 8165 / MA-4680</strain>
    </source>
</reference>
<reference key="2">
    <citation type="journal article" date="2003" name="Nat. Biotechnol.">
        <title>Complete genome sequence and comparative analysis of the industrial microorganism Streptomyces avermitilis.</title>
        <authorList>
            <person name="Ikeda H."/>
            <person name="Ishikawa J."/>
            <person name="Hanamoto A."/>
            <person name="Shinose M."/>
            <person name="Kikuchi H."/>
            <person name="Shiba T."/>
            <person name="Sakaki Y."/>
            <person name="Hattori M."/>
            <person name="Omura S."/>
        </authorList>
    </citation>
    <scope>NUCLEOTIDE SEQUENCE [LARGE SCALE GENOMIC DNA]</scope>
    <source>
        <strain>ATCC 31267 / DSM 46492 / JCM 5070 / NBRC 14893 / NCIMB 12804 / NRRL 8165 / MA-4680</strain>
    </source>
</reference>